<proteinExistence type="evidence at transcript level"/>
<gene>
    <name evidence="8" type="primary">rtn1</name>
</gene>
<evidence type="ECO:0000250" key="1">
    <source>
        <dbReference type="UniProtKB" id="Q16799"/>
    </source>
</evidence>
<evidence type="ECO:0000250" key="2">
    <source>
        <dbReference type="UniProtKB" id="Q5MY90"/>
    </source>
</evidence>
<evidence type="ECO:0000255" key="3"/>
<evidence type="ECO:0000255" key="4">
    <source>
        <dbReference type="PROSITE-ProRule" id="PRU00170"/>
    </source>
</evidence>
<evidence type="ECO:0000256" key="5">
    <source>
        <dbReference type="SAM" id="MobiDB-lite"/>
    </source>
</evidence>
<evidence type="ECO:0000303" key="6">
    <source ref="1"/>
</evidence>
<evidence type="ECO:0000305" key="7"/>
<evidence type="ECO:0000312" key="8">
    <source>
        <dbReference type="EMBL" id="AAI18847.1"/>
    </source>
</evidence>
<evidence type="ECO:0000312" key="9">
    <source>
        <dbReference type="EMBL" id="AAI52061.1"/>
    </source>
</evidence>
<evidence type="ECO:0000312" key="10">
    <source>
        <dbReference type="EMBL" id="DAA02071.1"/>
    </source>
</evidence>
<feature type="chain" id="PRO_0000315934" description="Reticulon-1">
    <location>
        <begin position="1"/>
        <end position="764"/>
    </location>
</feature>
<feature type="transmembrane region" description="Helical" evidence="3">
    <location>
        <begin position="607"/>
        <end position="627"/>
    </location>
</feature>
<feature type="transmembrane region" description="Helical" evidence="3">
    <location>
        <begin position="696"/>
        <end position="716"/>
    </location>
</feature>
<feature type="domain" description="Reticulon" evidence="4">
    <location>
        <begin position="578"/>
        <end position="764"/>
    </location>
</feature>
<feature type="region of interest" description="Disordered" evidence="5">
    <location>
        <begin position="1"/>
        <end position="37"/>
    </location>
</feature>
<feature type="region of interest" description="Disordered" evidence="5">
    <location>
        <begin position="115"/>
        <end position="147"/>
    </location>
</feature>
<feature type="region of interest" description="Disordered" evidence="5">
    <location>
        <begin position="247"/>
        <end position="400"/>
    </location>
</feature>
<feature type="region of interest" description="Disordered" evidence="5">
    <location>
        <begin position="455"/>
        <end position="475"/>
    </location>
</feature>
<feature type="compositionally biased region" description="Polar residues" evidence="5">
    <location>
        <begin position="261"/>
        <end position="282"/>
    </location>
</feature>
<feature type="compositionally biased region" description="Basic and acidic residues" evidence="5">
    <location>
        <begin position="328"/>
        <end position="337"/>
    </location>
</feature>
<feature type="splice variant" id="VSP_052644" description="In isoform C." evidence="6">
    <location>
        <begin position="1"/>
        <end position="557"/>
    </location>
</feature>
<feature type="splice variant" id="VSP_052645" description="In isoform C." evidence="6">
    <original>VLGKTSTLPLKPLPFLSKRK</original>
    <variation>MQASADSTRMECLWSNWKCQ</variation>
    <location>
        <begin position="558"/>
        <end position="577"/>
    </location>
</feature>
<accession>A7MC64</accession>
<accession>Q0VFF6</accession>
<accession>Q6IFY6</accession>
<organism>
    <name type="scientific">Xenopus tropicalis</name>
    <name type="common">Western clawed frog</name>
    <name type="synonym">Silurana tropicalis</name>
    <dbReference type="NCBI Taxonomy" id="8364"/>
    <lineage>
        <taxon>Eukaryota</taxon>
        <taxon>Metazoa</taxon>
        <taxon>Chordata</taxon>
        <taxon>Craniata</taxon>
        <taxon>Vertebrata</taxon>
        <taxon>Euteleostomi</taxon>
        <taxon>Amphibia</taxon>
        <taxon>Batrachia</taxon>
        <taxon>Anura</taxon>
        <taxon>Pipoidea</taxon>
        <taxon>Pipidae</taxon>
        <taxon>Xenopodinae</taxon>
        <taxon>Xenopus</taxon>
        <taxon>Silurana</taxon>
    </lineage>
</organism>
<dbReference type="EMBL" id="BC118846">
    <property type="protein sequence ID" value="AAI18847.1"/>
    <property type="status" value="ALT_INIT"/>
    <property type="molecule type" value="mRNA"/>
</dbReference>
<dbReference type="EMBL" id="BC152060">
    <property type="protein sequence ID" value="AAI52061.1"/>
    <property type="status" value="ALT_INIT"/>
    <property type="molecule type" value="mRNA"/>
</dbReference>
<dbReference type="EMBL" id="AL635298">
    <property type="status" value="NOT_ANNOTATED_CDS"/>
    <property type="molecule type" value="mRNA"/>
</dbReference>
<dbReference type="EMBL" id="BK004008">
    <property type="protein sequence ID" value="DAA02071.1"/>
    <property type="status" value="ALT_FRAME"/>
    <property type="molecule type" value="mRNA"/>
</dbReference>
<dbReference type="RefSeq" id="NP_001078819.2">
    <molecule id="A7MC64-1"/>
    <property type="nucleotide sequence ID" value="NM_001085350.2"/>
</dbReference>
<dbReference type="RefSeq" id="XP_012823986.1">
    <molecule id="A7MC64-2"/>
    <property type="nucleotide sequence ID" value="XM_012968532.2"/>
</dbReference>
<dbReference type="SMR" id="A7MC64"/>
<dbReference type="FunCoup" id="A7MC64">
    <property type="interactions" value="411"/>
</dbReference>
<dbReference type="STRING" id="8364.ENSXETP00000043862"/>
<dbReference type="PaxDb" id="8364-ENSXETP00000058548"/>
<dbReference type="DNASU" id="677736"/>
<dbReference type="GeneID" id="677736"/>
<dbReference type="KEGG" id="xtr:677736"/>
<dbReference type="AGR" id="Xenbase:XB-GENE-1011333"/>
<dbReference type="CTD" id="6252"/>
<dbReference type="Xenbase" id="XB-GENE-1011333">
    <property type="gene designation" value="rtn1"/>
</dbReference>
<dbReference type="eggNOG" id="KOG1792">
    <property type="taxonomic scope" value="Eukaryota"/>
</dbReference>
<dbReference type="HOGENOM" id="CLU_048580_2_1_1"/>
<dbReference type="InParanoid" id="A7MC64"/>
<dbReference type="OMA" id="CLWSCWK"/>
<dbReference type="OrthoDB" id="567788at2759"/>
<dbReference type="PhylomeDB" id="A7MC64"/>
<dbReference type="Proteomes" id="UP000008143">
    <property type="component" value="Chromosome 8"/>
</dbReference>
<dbReference type="Bgee" id="ENSXETG00000016983">
    <property type="expression patterns" value="Expressed in central nervous system and 11 other cell types or tissues"/>
</dbReference>
<dbReference type="GO" id="GO:0005789">
    <property type="term" value="C:endoplasmic reticulum membrane"/>
    <property type="evidence" value="ECO:0000250"/>
    <property type="project" value="UniProtKB"/>
</dbReference>
<dbReference type="GO" id="GO:0005634">
    <property type="term" value="C:nucleus"/>
    <property type="evidence" value="ECO:0000250"/>
    <property type="project" value="UniProtKB"/>
</dbReference>
<dbReference type="FunFam" id="1.20.5.2480:FF:000001">
    <property type="entry name" value="Reticulon"/>
    <property type="match status" value="1"/>
</dbReference>
<dbReference type="Gene3D" id="1.20.5.2480">
    <property type="match status" value="1"/>
</dbReference>
<dbReference type="InterPro" id="IPR003388">
    <property type="entry name" value="Reticulon"/>
</dbReference>
<dbReference type="InterPro" id="IPR046964">
    <property type="entry name" value="RTN1-4"/>
</dbReference>
<dbReference type="PANTHER" id="PTHR45799:SF5">
    <property type="entry name" value="RETICULON-1"/>
    <property type="match status" value="1"/>
</dbReference>
<dbReference type="PANTHER" id="PTHR45799">
    <property type="entry name" value="RETICULON-LIKE PROTEIN"/>
    <property type="match status" value="1"/>
</dbReference>
<dbReference type="Pfam" id="PF02453">
    <property type="entry name" value="Reticulon"/>
    <property type="match status" value="1"/>
</dbReference>
<dbReference type="PROSITE" id="PS50845">
    <property type="entry name" value="RETICULON"/>
    <property type="match status" value="1"/>
</dbReference>
<protein>
    <recommendedName>
        <fullName>Reticulon-1</fullName>
    </recommendedName>
</protein>
<name>RTN1_XENTR</name>
<reference evidence="7 9" key="1">
    <citation type="submission" date="2007-08" db="EMBL/GenBank/DDBJ databases">
        <authorList>
            <consortium name="NIH - Xenopus Gene Collection (XGC) project"/>
        </authorList>
    </citation>
    <scope>NUCLEOTIDE SEQUENCE [LARGE SCALE MRNA] (ISOFORMS A AND C)</scope>
    <source>
        <tissue evidence="9">Brain</tissue>
    </source>
</reference>
<reference evidence="7 9" key="2">
    <citation type="submission" date="2003-11" db="EMBL/GenBank/DDBJ databases">
        <authorList>
            <consortium name="Sanger Xenopus tropicalis EST/cDNA project"/>
        </authorList>
    </citation>
    <scope>NUCLEOTIDE SEQUENCE [LARGE SCALE MRNA] OF 413-599 (ISOFORM A)</scope>
    <source>
        <tissue>Neurula</tissue>
    </source>
</reference>
<reference evidence="7 10" key="3">
    <citation type="journal article" date="2003" name="FASEB J.">
        <title>A reticular rhapsody: phylogenic evolution and nomenclature of the RTN/Nogo gene family.</title>
        <authorList>
            <person name="Oertle T."/>
            <person name="Klinger M."/>
            <person name="Stuermer C.A.O."/>
            <person name="Schwab M.E."/>
        </authorList>
    </citation>
    <scope>IDENTIFICATION (ISOFORM A)</scope>
</reference>
<keyword id="KW-0025">Alternative splicing</keyword>
<keyword id="KW-0256">Endoplasmic reticulum</keyword>
<keyword id="KW-0472">Membrane</keyword>
<keyword id="KW-0539">Nucleus</keyword>
<keyword id="KW-1185">Reference proteome</keyword>
<keyword id="KW-0812">Transmembrane</keyword>
<keyword id="KW-1133">Transmembrane helix</keyword>
<sequence length="764" mass="84448">MAANPEVFSGRLEGNVAAARRPGSAQEEEGEAAGGALSCVDQGRTIKAEQAGHPTVAMEITSTDFTSTLHLHDAESKELPGDENGLSYTYLSSDKHSHTDSTYFTGISKKGTESPDIKEFSGVGPRSPKEIPTFDSRGLLSSDSGIEMTPAECSEVNKSLADPTEEEKQEAYKYIDISRSPDMKPQQVLDKDFGENKASTIGQAAPTEQQAYDSVTMSWQKDHYNGNISEYLPYVPYMEEPRKDFGLYNSPTSKEPKSAPVTISFTGMETTLQTEYPENQQGKSDKGLKLSPDMVPTVTVSEPEDNSPESITPPSTDADGYTEPSGLEEQRKYKISEDELISAIKAKEGTKGFSSETNEEKQSYSFNVEKQDFTVLPTRDAPAPLDMEGSSTESGDSEIELVSEDQVGAEEAMQSAYMTFSHIGGPPPSPASPSIQYSILREEREAELDSELIIESCDGSSASEESPKRDQDSPMMKPMIMDIIEEENLSRAESFDASDFESCSLKERKLNMENLAESACYLKGTYHTEIRADMPSTKKEELLPQKKSPEGSAYQSKVLGKTSTLPLKPLPFLSKRKAIELLYWRDIKQTGIVFGSVLLMLFSLTQFSVVSVIAYLALAALSATISFRIYKSVLQAVQKTDEGHPFKSYLDMEISLSQEQIQKYTDCLQAYTNSIVKELRRLFLVQDLVDSLKFAVLMWLLTYVGALFNGLTLLIMAVVSMFSLPVVYDKYQAQIDQYLGLVRTNMNTIVTKIQAKIPGTKQKE</sequence>
<comment type="function">
    <text evidence="1">Inhibits amyloid precursor protein processing, probably by blocking BACE1 activity.</text>
</comment>
<comment type="subcellular location">
    <subcellularLocation>
        <location evidence="2">Endoplasmic reticulum membrane</location>
        <topology evidence="3">Multi-pass membrane protein</topology>
    </subcellularLocation>
    <subcellularLocation>
        <location evidence="2">Nucleus</location>
    </subcellularLocation>
    <text evidence="2">Mainly localized to the endoplasmic reticulum with some expression in the nucleus and polysome fractions.</text>
</comment>
<comment type="alternative products">
    <event type="alternative splicing"/>
    <isoform>
        <id>A7MC64-1</id>
        <name>A</name>
        <sequence type="displayed"/>
    </isoform>
    <isoform>
        <id>A7MC64-2</id>
        <name>C</name>
        <sequence type="described" ref="VSP_052644 VSP_052645"/>
    </isoform>
</comment>
<comment type="sequence caution" evidence="7">
    <conflict type="erroneous initiation">
        <sequence resource="EMBL-CDS" id="AAI18847"/>
    </conflict>
</comment>
<comment type="sequence caution" evidence="7">
    <conflict type="erroneous initiation">
        <sequence resource="EMBL-CDS" id="AAI52061"/>
    </conflict>
</comment>
<comment type="sequence caution" evidence="7">
    <conflict type="frameshift">
        <sequence resource="EMBL" id="AL635298"/>
    </conflict>
</comment>
<comment type="sequence caution" evidence="7">
    <conflict type="frameshift">
        <sequence resource="EMBL-CDS" id="DAA02071"/>
    </conflict>
</comment>